<name>ASTB_ECODH</name>
<sequence length="447" mass="49299">MNAWEVNFDGLVGLTHHYAGLSFGNEASTRHRFQVSNPRLAAKQGLLKMKALADAGFPQAVIPPHERPFIPVLRQLGFSGSDEQVLEKVARQAPHWLSSVSSASPMWVANAATIAPSADTLDGKVHLTVANLNNKFHRSLEAPVTESLLKAIFNDEEKFSVHSALPQVALLGDEGAANHNRLGGHYGEPGMQLFVYGREEGNDTRPSRYPARQTREASEAVARLNQVNPQQVIFAQQNPDVIDQGVFHNDVIAVSNRQVLFCHQQAFARQSQLLANLRARVNGFMAIEVPATQVSVSDTVSTYLFNSQLLSRDDGSMMLVLPQECREHAGVWGYLNELLAADNPISELKVFDLRESMANGGGPACLRLRVVLTEEERRAVNPAVMMNDTLFNALNDWVDRYYRDRLTAADLADPQLLREGREALDVLSQLLNLGSVYPFQREGGGNG</sequence>
<keyword id="KW-0056">Arginine metabolism</keyword>
<keyword id="KW-0378">Hydrolase</keyword>
<comment type="function">
    <text evidence="1">Catalyzes the hydrolysis of N(2)-succinylarginine into N(2)-succinylornithine, ammonia and CO(2).</text>
</comment>
<comment type="catalytic activity">
    <reaction evidence="1">
        <text>N(2)-succinyl-L-arginine + 2 H2O + 2 H(+) = N(2)-succinyl-L-ornithine + 2 NH4(+) + CO2</text>
        <dbReference type="Rhea" id="RHEA:19533"/>
        <dbReference type="ChEBI" id="CHEBI:15377"/>
        <dbReference type="ChEBI" id="CHEBI:15378"/>
        <dbReference type="ChEBI" id="CHEBI:16526"/>
        <dbReference type="ChEBI" id="CHEBI:28938"/>
        <dbReference type="ChEBI" id="CHEBI:58241"/>
        <dbReference type="ChEBI" id="CHEBI:58514"/>
        <dbReference type="EC" id="3.5.3.23"/>
    </reaction>
</comment>
<comment type="pathway">
    <text evidence="1">Amino-acid degradation; L-arginine degradation via AST pathway; L-glutamate and succinate from L-arginine: step 2/5.</text>
</comment>
<comment type="subunit">
    <text evidence="1">Homodimer.</text>
</comment>
<comment type="similarity">
    <text evidence="1">Belongs to the succinylarginine dihydrolase family.</text>
</comment>
<organism>
    <name type="scientific">Escherichia coli (strain K12 / DH10B)</name>
    <dbReference type="NCBI Taxonomy" id="316385"/>
    <lineage>
        <taxon>Bacteria</taxon>
        <taxon>Pseudomonadati</taxon>
        <taxon>Pseudomonadota</taxon>
        <taxon>Gammaproteobacteria</taxon>
        <taxon>Enterobacterales</taxon>
        <taxon>Enterobacteriaceae</taxon>
        <taxon>Escherichia</taxon>
    </lineage>
</organism>
<dbReference type="EC" id="3.5.3.23" evidence="1"/>
<dbReference type="EMBL" id="CP000948">
    <property type="protein sequence ID" value="ACB02944.1"/>
    <property type="molecule type" value="Genomic_DNA"/>
</dbReference>
<dbReference type="RefSeq" id="WP_000994973.1">
    <property type="nucleotide sequence ID" value="NC_010473.1"/>
</dbReference>
<dbReference type="SMR" id="B1XGK6"/>
<dbReference type="KEGG" id="ecd:ECDH10B_1883"/>
<dbReference type="HOGENOM" id="CLU_053835_0_0_6"/>
<dbReference type="UniPathway" id="UPA00185">
    <property type="reaction ID" value="UER00280"/>
</dbReference>
<dbReference type="GO" id="GO:0009015">
    <property type="term" value="F:N-succinylarginine dihydrolase activity"/>
    <property type="evidence" value="ECO:0007669"/>
    <property type="project" value="UniProtKB-UniRule"/>
</dbReference>
<dbReference type="GO" id="GO:0019544">
    <property type="term" value="P:arginine catabolic process to glutamate"/>
    <property type="evidence" value="ECO:0007669"/>
    <property type="project" value="UniProtKB-UniRule"/>
</dbReference>
<dbReference type="GO" id="GO:0019545">
    <property type="term" value="P:arginine catabolic process to succinate"/>
    <property type="evidence" value="ECO:0007669"/>
    <property type="project" value="UniProtKB-UniRule"/>
</dbReference>
<dbReference type="FunFam" id="3.75.10.20:FF:000001">
    <property type="entry name" value="N-succinylarginine dihydrolase"/>
    <property type="match status" value="1"/>
</dbReference>
<dbReference type="Gene3D" id="3.75.10.20">
    <property type="entry name" value="Succinylarginine dihydrolase"/>
    <property type="match status" value="1"/>
</dbReference>
<dbReference type="HAMAP" id="MF_01172">
    <property type="entry name" value="AstB"/>
    <property type="match status" value="1"/>
</dbReference>
<dbReference type="InterPro" id="IPR037031">
    <property type="entry name" value="AstB_sf"/>
</dbReference>
<dbReference type="InterPro" id="IPR007079">
    <property type="entry name" value="SuccinylArg_d-Hdrlase_AstB"/>
</dbReference>
<dbReference type="NCBIfam" id="TIGR03241">
    <property type="entry name" value="arg_catab_astB"/>
    <property type="match status" value="1"/>
</dbReference>
<dbReference type="NCBIfam" id="NF009789">
    <property type="entry name" value="PRK13281.1"/>
    <property type="match status" value="1"/>
</dbReference>
<dbReference type="PANTHER" id="PTHR30420">
    <property type="entry name" value="N-SUCCINYLARGININE DIHYDROLASE"/>
    <property type="match status" value="1"/>
</dbReference>
<dbReference type="PANTHER" id="PTHR30420:SF2">
    <property type="entry name" value="N-SUCCINYLARGININE DIHYDROLASE"/>
    <property type="match status" value="1"/>
</dbReference>
<dbReference type="Pfam" id="PF04996">
    <property type="entry name" value="AstB"/>
    <property type="match status" value="1"/>
</dbReference>
<dbReference type="SUPFAM" id="SSF55909">
    <property type="entry name" value="Pentein"/>
    <property type="match status" value="1"/>
</dbReference>
<evidence type="ECO:0000255" key="1">
    <source>
        <dbReference type="HAMAP-Rule" id="MF_01172"/>
    </source>
</evidence>
<feature type="chain" id="PRO_1000138013" description="N-succinylarginine dihydrolase">
    <location>
        <begin position="1"/>
        <end position="447"/>
    </location>
</feature>
<feature type="active site" evidence="1">
    <location>
        <position position="174"/>
    </location>
</feature>
<feature type="active site" evidence="1">
    <location>
        <position position="248"/>
    </location>
</feature>
<feature type="active site" description="Nucleophile" evidence="1">
    <location>
        <position position="365"/>
    </location>
</feature>
<feature type="binding site" evidence="1">
    <location>
        <begin position="19"/>
        <end position="28"/>
    </location>
    <ligand>
        <name>substrate</name>
    </ligand>
</feature>
<feature type="binding site" evidence="1">
    <location>
        <position position="110"/>
    </location>
    <ligand>
        <name>substrate</name>
    </ligand>
</feature>
<feature type="binding site" evidence="1">
    <location>
        <begin position="137"/>
        <end position="138"/>
    </location>
    <ligand>
        <name>substrate</name>
    </ligand>
</feature>
<feature type="binding site" evidence="1">
    <location>
        <position position="212"/>
    </location>
    <ligand>
        <name>substrate</name>
    </ligand>
</feature>
<feature type="binding site" evidence="1">
    <location>
        <position position="250"/>
    </location>
    <ligand>
        <name>substrate</name>
    </ligand>
</feature>
<feature type="binding site" evidence="1">
    <location>
        <position position="359"/>
    </location>
    <ligand>
        <name>substrate</name>
    </ligand>
</feature>
<protein>
    <recommendedName>
        <fullName evidence="1">N-succinylarginine dihydrolase</fullName>
        <ecNumber evidence="1">3.5.3.23</ecNumber>
    </recommendedName>
</protein>
<gene>
    <name evidence="1" type="primary">astB</name>
    <name type="ordered locus">ECDH10B_1883</name>
</gene>
<accession>B1XGK6</accession>
<proteinExistence type="inferred from homology"/>
<reference key="1">
    <citation type="journal article" date="2008" name="J. Bacteriol.">
        <title>The complete genome sequence of Escherichia coli DH10B: insights into the biology of a laboratory workhorse.</title>
        <authorList>
            <person name="Durfee T."/>
            <person name="Nelson R."/>
            <person name="Baldwin S."/>
            <person name="Plunkett G. III"/>
            <person name="Burland V."/>
            <person name="Mau B."/>
            <person name="Petrosino J.F."/>
            <person name="Qin X."/>
            <person name="Muzny D.M."/>
            <person name="Ayele M."/>
            <person name="Gibbs R.A."/>
            <person name="Csorgo B."/>
            <person name="Posfai G."/>
            <person name="Weinstock G.M."/>
            <person name="Blattner F.R."/>
        </authorList>
    </citation>
    <scope>NUCLEOTIDE SEQUENCE [LARGE SCALE GENOMIC DNA]</scope>
    <source>
        <strain>K12 / DH10B</strain>
    </source>
</reference>